<organism>
    <name type="scientific">Mus musculus</name>
    <name type="common">Mouse</name>
    <dbReference type="NCBI Taxonomy" id="10090"/>
    <lineage>
        <taxon>Eukaryota</taxon>
        <taxon>Metazoa</taxon>
        <taxon>Chordata</taxon>
        <taxon>Craniata</taxon>
        <taxon>Vertebrata</taxon>
        <taxon>Euteleostomi</taxon>
        <taxon>Mammalia</taxon>
        <taxon>Eutheria</taxon>
        <taxon>Euarchontoglires</taxon>
        <taxon>Glires</taxon>
        <taxon>Rodentia</taxon>
        <taxon>Myomorpha</taxon>
        <taxon>Muroidea</taxon>
        <taxon>Muridae</taxon>
        <taxon>Murinae</taxon>
        <taxon>Mus</taxon>
        <taxon>Mus</taxon>
    </lineage>
</organism>
<proteinExistence type="evidence at protein level"/>
<keyword id="KW-0009">Actin-binding</keyword>
<keyword id="KW-0175">Coiled coil</keyword>
<keyword id="KW-0963">Cytoplasm</keyword>
<keyword id="KW-0206">Cytoskeleton</keyword>
<keyword id="KW-0903">Direct protein sequencing</keyword>
<keyword id="KW-0597">Phosphoprotein</keyword>
<keyword id="KW-1185">Reference proteome</keyword>
<keyword id="KW-0677">Repeat</keyword>
<keyword id="KW-0853">WD repeat</keyword>
<feature type="chain" id="PRO_0000050923" description="Coronin-1B">
    <location>
        <begin position="1"/>
        <end position="484"/>
    </location>
</feature>
<feature type="repeat" description="WD 1">
    <location>
        <begin position="80"/>
        <end position="120"/>
    </location>
</feature>
<feature type="repeat" description="WD 2">
    <location>
        <begin position="130"/>
        <end position="170"/>
    </location>
</feature>
<feature type="repeat" description="WD 3">
    <location>
        <begin position="174"/>
        <end position="213"/>
    </location>
</feature>
<feature type="repeat" description="WD 4">
    <location>
        <begin position="217"/>
        <end position="260"/>
    </location>
</feature>
<feature type="repeat" description="WD 5">
    <location>
        <begin position="265"/>
        <end position="305"/>
    </location>
</feature>
<feature type="region of interest" description="Disordered" evidence="4">
    <location>
        <begin position="404"/>
        <end position="446"/>
    </location>
</feature>
<feature type="coiled-coil region" evidence="3">
    <location>
        <begin position="444"/>
        <end position="482"/>
    </location>
</feature>
<feature type="compositionally biased region" description="Polar residues" evidence="4">
    <location>
        <begin position="410"/>
        <end position="430"/>
    </location>
</feature>
<feature type="modified residue" description="Phosphoserine" evidence="2">
    <location>
        <position position="2"/>
    </location>
</feature>
<feature type="sequence conflict" description="In Ref. 2; BAB25985." evidence="6" ref="2">
    <original>R</original>
    <variation>G</variation>
    <location>
        <position position="393"/>
    </location>
</feature>
<reference key="1">
    <citation type="journal article" date="1998" name="DNA Cell Biol.">
        <title>Definition of family of coronin-related proteins conserved between humans and mice: close genetic linkage between coronin-2 and CD45-associated protein.</title>
        <authorList>
            <person name="Okumura M."/>
            <person name="Kung C."/>
            <person name="Wong S."/>
            <person name="Rodgers M."/>
            <person name="Thomas M.L."/>
        </authorList>
    </citation>
    <scope>NUCLEOTIDE SEQUENCE [MRNA]</scope>
</reference>
<reference key="2">
    <citation type="journal article" date="2005" name="Science">
        <title>The transcriptional landscape of the mammalian genome.</title>
        <authorList>
            <person name="Carninci P."/>
            <person name="Kasukawa T."/>
            <person name="Katayama S."/>
            <person name="Gough J."/>
            <person name="Frith M.C."/>
            <person name="Maeda N."/>
            <person name="Oyama R."/>
            <person name="Ravasi T."/>
            <person name="Lenhard B."/>
            <person name="Wells C."/>
            <person name="Kodzius R."/>
            <person name="Shimokawa K."/>
            <person name="Bajic V.B."/>
            <person name="Brenner S.E."/>
            <person name="Batalov S."/>
            <person name="Forrest A.R."/>
            <person name="Zavolan M."/>
            <person name="Davis M.J."/>
            <person name="Wilming L.G."/>
            <person name="Aidinis V."/>
            <person name="Allen J.E."/>
            <person name="Ambesi-Impiombato A."/>
            <person name="Apweiler R."/>
            <person name="Aturaliya R.N."/>
            <person name="Bailey T.L."/>
            <person name="Bansal M."/>
            <person name="Baxter L."/>
            <person name="Beisel K.W."/>
            <person name="Bersano T."/>
            <person name="Bono H."/>
            <person name="Chalk A.M."/>
            <person name="Chiu K.P."/>
            <person name="Choudhary V."/>
            <person name="Christoffels A."/>
            <person name="Clutterbuck D.R."/>
            <person name="Crowe M.L."/>
            <person name="Dalla E."/>
            <person name="Dalrymple B.P."/>
            <person name="de Bono B."/>
            <person name="Della Gatta G."/>
            <person name="di Bernardo D."/>
            <person name="Down T."/>
            <person name="Engstrom P."/>
            <person name="Fagiolini M."/>
            <person name="Faulkner G."/>
            <person name="Fletcher C.F."/>
            <person name="Fukushima T."/>
            <person name="Furuno M."/>
            <person name="Futaki S."/>
            <person name="Gariboldi M."/>
            <person name="Georgii-Hemming P."/>
            <person name="Gingeras T.R."/>
            <person name="Gojobori T."/>
            <person name="Green R.E."/>
            <person name="Gustincich S."/>
            <person name="Harbers M."/>
            <person name="Hayashi Y."/>
            <person name="Hensch T.K."/>
            <person name="Hirokawa N."/>
            <person name="Hill D."/>
            <person name="Huminiecki L."/>
            <person name="Iacono M."/>
            <person name="Ikeo K."/>
            <person name="Iwama A."/>
            <person name="Ishikawa T."/>
            <person name="Jakt M."/>
            <person name="Kanapin A."/>
            <person name="Katoh M."/>
            <person name="Kawasawa Y."/>
            <person name="Kelso J."/>
            <person name="Kitamura H."/>
            <person name="Kitano H."/>
            <person name="Kollias G."/>
            <person name="Krishnan S.P."/>
            <person name="Kruger A."/>
            <person name="Kummerfeld S.K."/>
            <person name="Kurochkin I.V."/>
            <person name="Lareau L.F."/>
            <person name="Lazarevic D."/>
            <person name="Lipovich L."/>
            <person name="Liu J."/>
            <person name="Liuni S."/>
            <person name="McWilliam S."/>
            <person name="Madan Babu M."/>
            <person name="Madera M."/>
            <person name="Marchionni L."/>
            <person name="Matsuda H."/>
            <person name="Matsuzawa S."/>
            <person name="Miki H."/>
            <person name="Mignone F."/>
            <person name="Miyake S."/>
            <person name="Morris K."/>
            <person name="Mottagui-Tabar S."/>
            <person name="Mulder N."/>
            <person name="Nakano N."/>
            <person name="Nakauchi H."/>
            <person name="Ng P."/>
            <person name="Nilsson R."/>
            <person name="Nishiguchi S."/>
            <person name="Nishikawa S."/>
            <person name="Nori F."/>
            <person name="Ohara O."/>
            <person name="Okazaki Y."/>
            <person name="Orlando V."/>
            <person name="Pang K.C."/>
            <person name="Pavan W.J."/>
            <person name="Pavesi G."/>
            <person name="Pesole G."/>
            <person name="Petrovsky N."/>
            <person name="Piazza S."/>
            <person name="Reed J."/>
            <person name="Reid J.F."/>
            <person name="Ring B.Z."/>
            <person name="Ringwald M."/>
            <person name="Rost B."/>
            <person name="Ruan Y."/>
            <person name="Salzberg S.L."/>
            <person name="Sandelin A."/>
            <person name="Schneider C."/>
            <person name="Schoenbach C."/>
            <person name="Sekiguchi K."/>
            <person name="Semple C.A."/>
            <person name="Seno S."/>
            <person name="Sessa L."/>
            <person name="Sheng Y."/>
            <person name="Shibata Y."/>
            <person name="Shimada H."/>
            <person name="Shimada K."/>
            <person name="Silva D."/>
            <person name="Sinclair B."/>
            <person name="Sperling S."/>
            <person name="Stupka E."/>
            <person name="Sugiura K."/>
            <person name="Sultana R."/>
            <person name="Takenaka Y."/>
            <person name="Taki K."/>
            <person name="Tammoja K."/>
            <person name="Tan S.L."/>
            <person name="Tang S."/>
            <person name="Taylor M.S."/>
            <person name="Tegner J."/>
            <person name="Teichmann S.A."/>
            <person name="Ueda H.R."/>
            <person name="van Nimwegen E."/>
            <person name="Verardo R."/>
            <person name="Wei C.L."/>
            <person name="Yagi K."/>
            <person name="Yamanishi H."/>
            <person name="Zabarovsky E."/>
            <person name="Zhu S."/>
            <person name="Zimmer A."/>
            <person name="Hide W."/>
            <person name="Bult C."/>
            <person name="Grimmond S.M."/>
            <person name="Teasdale R.D."/>
            <person name="Liu E.T."/>
            <person name="Brusic V."/>
            <person name="Quackenbush J."/>
            <person name="Wahlestedt C."/>
            <person name="Mattick J.S."/>
            <person name="Hume D.A."/>
            <person name="Kai C."/>
            <person name="Sasaki D."/>
            <person name="Tomaru Y."/>
            <person name="Fukuda S."/>
            <person name="Kanamori-Katayama M."/>
            <person name="Suzuki M."/>
            <person name="Aoki J."/>
            <person name="Arakawa T."/>
            <person name="Iida J."/>
            <person name="Imamura K."/>
            <person name="Itoh M."/>
            <person name="Kato T."/>
            <person name="Kawaji H."/>
            <person name="Kawagashira N."/>
            <person name="Kawashima T."/>
            <person name="Kojima M."/>
            <person name="Kondo S."/>
            <person name="Konno H."/>
            <person name="Nakano K."/>
            <person name="Ninomiya N."/>
            <person name="Nishio T."/>
            <person name="Okada M."/>
            <person name="Plessy C."/>
            <person name="Shibata K."/>
            <person name="Shiraki T."/>
            <person name="Suzuki S."/>
            <person name="Tagami M."/>
            <person name="Waki K."/>
            <person name="Watahiki A."/>
            <person name="Okamura-Oho Y."/>
            <person name="Suzuki H."/>
            <person name="Kawai J."/>
            <person name="Hayashizaki Y."/>
        </authorList>
    </citation>
    <scope>NUCLEOTIDE SEQUENCE [LARGE SCALE MRNA]</scope>
    <source>
        <strain>C57BL/6J</strain>
        <tissue>Bone marrow</tissue>
        <tissue>Stomach</tissue>
    </source>
</reference>
<reference key="3">
    <citation type="submission" date="2009-01" db="UniProtKB">
        <authorList>
            <person name="Lubec G."/>
            <person name="Sunyer B."/>
            <person name="Chen W.-Q."/>
        </authorList>
    </citation>
    <scope>PROTEIN SEQUENCE OF 34-46; 135-145 AND 423-456</scope>
    <scope>IDENTIFICATION BY MASS SPECTROMETRY</scope>
    <source>
        <strain>OF1</strain>
        <tissue>Hippocampus</tissue>
    </source>
</reference>
<reference key="4">
    <citation type="journal article" date="2005" name="J. Biol. Chem.">
        <title>Phosphorylation of coronin 1B by protein kinase C regulates interaction with Arp2/3 and cell motility.</title>
        <authorList>
            <person name="Cai L."/>
            <person name="Holoweckyj N."/>
            <person name="Schaller M.D."/>
            <person name="Bear J.E."/>
        </authorList>
    </citation>
    <scope>TISSUE SPECIFICITY</scope>
    <scope>INTERACTION WITH ACTR2; ARPC1B AND ARPC2</scope>
</reference>
<reference key="5">
    <citation type="journal article" date="2010" name="Cell">
        <title>A tissue-specific atlas of mouse protein phosphorylation and expression.</title>
        <authorList>
            <person name="Huttlin E.L."/>
            <person name="Jedrychowski M.P."/>
            <person name="Elias J.E."/>
            <person name="Goswami T."/>
            <person name="Rad R."/>
            <person name="Beausoleil S.A."/>
            <person name="Villen J."/>
            <person name="Haas W."/>
            <person name="Sowa M.E."/>
            <person name="Gygi S.P."/>
        </authorList>
    </citation>
    <scope>IDENTIFICATION BY MASS SPECTROMETRY [LARGE SCALE ANALYSIS]</scope>
    <source>
        <tissue>Brain</tissue>
        <tissue>Brown adipose tissue</tissue>
        <tissue>Heart</tissue>
        <tissue>Kidney</tissue>
        <tissue>Liver</tissue>
        <tissue>Lung</tissue>
        <tissue>Pancreas</tissue>
        <tissue>Spleen</tissue>
        <tissue>Testis</tissue>
    </source>
</reference>
<sequence length="484" mass="53912">MSFRKVVRQSKFRHVFGQPVKNDQCYEDIRVSRVTWDSTFCAVNPKFLAVIVEASGGGAFMVLPLNKTGRIDKAYPTVCGHTGPVLDIDWCPHNDEVIASGSEDCTVMVWQIPENGLTSPLTEPVVVLEGHTKRVGIITWHPTARNVLLSAGCDNVVLIWNVGTAEELYRLDSLHPDLIYNVSWNHNGSLFCSACKDKSVRIIDPRRGTLVAEREKAHEGARPMRAIFLADGKVFTTGFSRMSERQLALWDPENLEEPMALQELDSSNGALLPFYDPDTSVVYVCGKGDSSIRYFEITDEPPYIHFLNTFTSKEPQRGMGSMPKRGLEVSKCEIARFYKLHERKCEPIVMTVPRKSDLFQDDLYPDTAGPEAALEAEDWVSGQDANPILISLREAYVPSKQRDLKVSRRNVLSDSRPASYSRSGASTATAVTDVPSGNLAGAGEAGKLEEVMQELRALRMLVKEQGERISRLEEQLGRMENGDT</sequence>
<dbReference type="EMBL" id="AF143956">
    <property type="protein sequence ID" value="AAD32704.1"/>
    <property type="molecule type" value="mRNA"/>
</dbReference>
<dbReference type="EMBL" id="AK008947">
    <property type="protein sequence ID" value="BAB25985.1"/>
    <property type="molecule type" value="mRNA"/>
</dbReference>
<dbReference type="EMBL" id="AK149639">
    <property type="protein sequence ID" value="BAE29000.1"/>
    <property type="molecule type" value="mRNA"/>
</dbReference>
<dbReference type="CCDS" id="CCDS29418.1"/>
<dbReference type="RefSeq" id="NP_001399866.1">
    <property type="nucleotide sequence ID" value="NM_001412937.1"/>
</dbReference>
<dbReference type="RefSeq" id="NP_001399867.1">
    <property type="nucleotide sequence ID" value="NM_001412938.1"/>
</dbReference>
<dbReference type="RefSeq" id="NP_035908.1">
    <property type="nucleotide sequence ID" value="NM_011778.3"/>
</dbReference>
<dbReference type="RefSeq" id="XP_006531804.1">
    <property type="nucleotide sequence ID" value="XM_006531741.2"/>
</dbReference>
<dbReference type="RefSeq" id="XP_006531805.1">
    <property type="nucleotide sequence ID" value="XM_006531742.1"/>
</dbReference>
<dbReference type="SMR" id="Q9WUM3"/>
<dbReference type="BioGRID" id="204713">
    <property type="interactions" value="19"/>
</dbReference>
<dbReference type="FunCoup" id="Q9WUM3">
    <property type="interactions" value="1603"/>
</dbReference>
<dbReference type="IntAct" id="Q9WUM3">
    <property type="interactions" value="2"/>
</dbReference>
<dbReference type="STRING" id="10090.ENSMUSP00000008893"/>
<dbReference type="GlyGen" id="Q9WUM3">
    <property type="glycosylation" value="2 sites, 1 O-linked glycan (2 sites)"/>
</dbReference>
<dbReference type="iPTMnet" id="Q9WUM3"/>
<dbReference type="PhosphoSitePlus" id="Q9WUM3"/>
<dbReference type="SwissPalm" id="Q9WUM3"/>
<dbReference type="jPOST" id="Q9WUM3"/>
<dbReference type="PaxDb" id="10090-ENSMUSP00000008893"/>
<dbReference type="ProteomicsDB" id="283608"/>
<dbReference type="Pumba" id="Q9WUM3"/>
<dbReference type="Antibodypedia" id="4316">
    <property type="antibodies" value="239 antibodies from 29 providers"/>
</dbReference>
<dbReference type="DNASU" id="23789"/>
<dbReference type="Ensembl" id="ENSMUST00000008893.9">
    <property type="protein sequence ID" value="ENSMUSP00000008893.9"/>
    <property type="gene ID" value="ENSMUSG00000024835.16"/>
</dbReference>
<dbReference type="GeneID" id="23789"/>
<dbReference type="KEGG" id="mmu:23789"/>
<dbReference type="UCSC" id="uc008fyy.1">
    <property type="organism name" value="mouse"/>
</dbReference>
<dbReference type="AGR" id="MGI:1345963"/>
<dbReference type="CTD" id="57175"/>
<dbReference type="MGI" id="MGI:1345963">
    <property type="gene designation" value="Coro1b"/>
</dbReference>
<dbReference type="VEuPathDB" id="HostDB:ENSMUSG00000024835"/>
<dbReference type="eggNOG" id="KOG0303">
    <property type="taxonomic scope" value="Eukaryota"/>
</dbReference>
<dbReference type="GeneTree" id="ENSGT00940000159031"/>
<dbReference type="HOGENOM" id="CLU_026859_0_1_1"/>
<dbReference type="InParanoid" id="Q9WUM3"/>
<dbReference type="OMA" id="IWSINFN"/>
<dbReference type="OrthoDB" id="1850764at2759"/>
<dbReference type="PhylomeDB" id="Q9WUM3"/>
<dbReference type="TreeFam" id="TF314280"/>
<dbReference type="BioGRID-ORCS" id="23789">
    <property type="hits" value="1 hit in 78 CRISPR screens"/>
</dbReference>
<dbReference type="CD-CODE" id="CE726F99">
    <property type="entry name" value="Postsynaptic density"/>
</dbReference>
<dbReference type="ChiTaRS" id="Coro1b">
    <property type="organism name" value="mouse"/>
</dbReference>
<dbReference type="PRO" id="PR:Q9WUM3"/>
<dbReference type="Proteomes" id="UP000000589">
    <property type="component" value="Chromosome 19"/>
</dbReference>
<dbReference type="RNAct" id="Q9WUM3">
    <property type="molecule type" value="protein"/>
</dbReference>
<dbReference type="Bgee" id="ENSMUSG00000024835">
    <property type="expression patterns" value="Expressed in ileum and 73 other cell types or tissues"/>
</dbReference>
<dbReference type="ExpressionAtlas" id="Q9WUM3">
    <property type="expression patterns" value="baseline and differential"/>
</dbReference>
<dbReference type="GO" id="GO:0005884">
    <property type="term" value="C:actin filament"/>
    <property type="evidence" value="ECO:0007669"/>
    <property type="project" value="Ensembl"/>
</dbReference>
<dbReference type="GO" id="GO:0005829">
    <property type="term" value="C:cytosol"/>
    <property type="evidence" value="ECO:0007669"/>
    <property type="project" value="Ensembl"/>
</dbReference>
<dbReference type="GO" id="GO:0098978">
    <property type="term" value="C:glutamatergic synapse"/>
    <property type="evidence" value="ECO:0000314"/>
    <property type="project" value="SynGO"/>
</dbReference>
<dbReference type="GO" id="GO:0030027">
    <property type="term" value="C:lamellipodium"/>
    <property type="evidence" value="ECO:0007669"/>
    <property type="project" value="Ensembl"/>
</dbReference>
<dbReference type="GO" id="GO:0048471">
    <property type="term" value="C:perinuclear region of cytoplasm"/>
    <property type="evidence" value="ECO:0007669"/>
    <property type="project" value="Ensembl"/>
</dbReference>
<dbReference type="GO" id="GO:0005886">
    <property type="term" value="C:plasma membrane"/>
    <property type="evidence" value="ECO:0007669"/>
    <property type="project" value="Ensembl"/>
</dbReference>
<dbReference type="GO" id="GO:0001725">
    <property type="term" value="C:stress fiber"/>
    <property type="evidence" value="ECO:0007669"/>
    <property type="project" value="UniProtKB-SubCell"/>
</dbReference>
<dbReference type="GO" id="GO:0045202">
    <property type="term" value="C:synapse"/>
    <property type="evidence" value="ECO:0000314"/>
    <property type="project" value="SynGO"/>
</dbReference>
<dbReference type="GO" id="GO:0051015">
    <property type="term" value="F:actin filament binding"/>
    <property type="evidence" value="ECO:0007669"/>
    <property type="project" value="Ensembl"/>
</dbReference>
<dbReference type="GO" id="GO:0071933">
    <property type="term" value="F:Arp2/3 complex binding"/>
    <property type="evidence" value="ECO:0007669"/>
    <property type="project" value="Ensembl"/>
</dbReference>
<dbReference type="GO" id="GO:0042802">
    <property type="term" value="F:identical protein binding"/>
    <property type="evidence" value="ECO:0007669"/>
    <property type="project" value="Ensembl"/>
</dbReference>
<dbReference type="GO" id="GO:0090135">
    <property type="term" value="P:actin filament branching"/>
    <property type="evidence" value="ECO:0007669"/>
    <property type="project" value="Ensembl"/>
</dbReference>
<dbReference type="GO" id="GO:0051017">
    <property type="term" value="P:actin filament bundle assembly"/>
    <property type="evidence" value="ECO:0007669"/>
    <property type="project" value="Ensembl"/>
</dbReference>
<dbReference type="GO" id="GO:0036120">
    <property type="term" value="P:cellular response to platelet-derived growth factor stimulus"/>
    <property type="evidence" value="ECO:0007669"/>
    <property type="project" value="Ensembl"/>
</dbReference>
<dbReference type="GO" id="GO:0035767">
    <property type="term" value="P:endothelial cell chemotaxis"/>
    <property type="evidence" value="ECO:0007669"/>
    <property type="project" value="Ensembl"/>
</dbReference>
<dbReference type="GO" id="GO:0034316">
    <property type="term" value="P:negative regulation of Arp2/3 complex-mediated actin nucleation"/>
    <property type="evidence" value="ECO:0007669"/>
    <property type="project" value="Ensembl"/>
</dbReference>
<dbReference type="GO" id="GO:0071672">
    <property type="term" value="P:negative regulation of smooth muscle cell chemotaxis"/>
    <property type="evidence" value="ECO:0007669"/>
    <property type="project" value="Ensembl"/>
</dbReference>
<dbReference type="GO" id="GO:2000394">
    <property type="term" value="P:positive regulation of lamellipodium morphogenesis"/>
    <property type="evidence" value="ECO:0007669"/>
    <property type="project" value="Ensembl"/>
</dbReference>
<dbReference type="GO" id="GO:1902463">
    <property type="term" value="P:protein localization to cell leading edge"/>
    <property type="evidence" value="ECO:0007669"/>
    <property type="project" value="Ensembl"/>
</dbReference>
<dbReference type="GO" id="GO:0031529">
    <property type="term" value="P:ruffle organization"/>
    <property type="evidence" value="ECO:0007669"/>
    <property type="project" value="Ensembl"/>
</dbReference>
<dbReference type="GO" id="GO:0042060">
    <property type="term" value="P:wound healing"/>
    <property type="evidence" value="ECO:0007669"/>
    <property type="project" value="Ensembl"/>
</dbReference>
<dbReference type="FunFam" id="2.130.10.10:FF:000003">
    <property type="entry name" value="Coronin"/>
    <property type="match status" value="1"/>
</dbReference>
<dbReference type="Gene3D" id="2.130.10.10">
    <property type="entry name" value="YVTN repeat-like/Quinoprotein amine dehydrogenase"/>
    <property type="match status" value="1"/>
</dbReference>
<dbReference type="InterPro" id="IPR015505">
    <property type="entry name" value="Coronin"/>
</dbReference>
<dbReference type="InterPro" id="IPR015048">
    <property type="entry name" value="DUF1899"/>
</dbReference>
<dbReference type="InterPro" id="IPR015943">
    <property type="entry name" value="WD40/YVTN_repeat-like_dom_sf"/>
</dbReference>
<dbReference type="InterPro" id="IPR019775">
    <property type="entry name" value="WD40_repeat_CS"/>
</dbReference>
<dbReference type="InterPro" id="IPR036322">
    <property type="entry name" value="WD40_repeat_dom_sf"/>
</dbReference>
<dbReference type="InterPro" id="IPR001680">
    <property type="entry name" value="WD40_rpt"/>
</dbReference>
<dbReference type="PANTHER" id="PTHR10856">
    <property type="entry name" value="CORONIN"/>
    <property type="match status" value="1"/>
</dbReference>
<dbReference type="PANTHER" id="PTHR10856:SF24">
    <property type="entry name" value="CORONIN-1B"/>
    <property type="match status" value="1"/>
</dbReference>
<dbReference type="Pfam" id="PF08953">
    <property type="entry name" value="DUF1899"/>
    <property type="match status" value="1"/>
</dbReference>
<dbReference type="Pfam" id="PF00400">
    <property type="entry name" value="WD40"/>
    <property type="match status" value="3"/>
</dbReference>
<dbReference type="Pfam" id="PF16300">
    <property type="entry name" value="WD40_4"/>
    <property type="match status" value="1"/>
</dbReference>
<dbReference type="SMART" id="SM01166">
    <property type="entry name" value="DUF1899"/>
    <property type="match status" value="1"/>
</dbReference>
<dbReference type="SMART" id="SM01167">
    <property type="entry name" value="DUF1900"/>
    <property type="match status" value="1"/>
</dbReference>
<dbReference type="SMART" id="SM00320">
    <property type="entry name" value="WD40"/>
    <property type="match status" value="3"/>
</dbReference>
<dbReference type="SUPFAM" id="SSF50978">
    <property type="entry name" value="WD40 repeat-like"/>
    <property type="match status" value="1"/>
</dbReference>
<dbReference type="PROSITE" id="PS00678">
    <property type="entry name" value="WD_REPEATS_1"/>
    <property type="match status" value="1"/>
</dbReference>
<dbReference type="PROSITE" id="PS50082">
    <property type="entry name" value="WD_REPEATS_2"/>
    <property type="match status" value="2"/>
</dbReference>
<dbReference type="PROSITE" id="PS50294">
    <property type="entry name" value="WD_REPEATS_REGION"/>
    <property type="match status" value="1"/>
</dbReference>
<gene>
    <name type="primary">Coro1b</name>
</gene>
<accession>Q9WUM3</accession>
<accession>Q3UEB1</accession>
<accession>Q9CVA2</accession>
<evidence type="ECO:0000250" key="1"/>
<evidence type="ECO:0000250" key="2">
    <source>
        <dbReference type="UniProtKB" id="Q9BR76"/>
    </source>
</evidence>
<evidence type="ECO:0000255" key="3"/>
<evidence type="ECO:0000256" key="4">
    <source>
        <dbReference type="SAM" id="MobiDB-lite"/>
    </source>
</evidence>
<evidence type="ECO:0000269" key="5">
    <source>
    </source>
</evidence>
<evidence type="ECO:0000305" key="6"/>
<name>COR1B_MOUSE</name>
<protein>
    <recommendedName>
        <fullName>Coronin-1B</fullName>
    </recommendedName>
    <alternativeName>
        <fullName>Coronin-2</fullName>
    </alternativeName>
</protein>
<comment type="function">
    <text evidence="1">Regulates leading edge dynamics and cell motility in fibroblasts. May be involved in cytokinesis and signal transduction (By similarity).</text>
</comment>
<comment type="subunit">
    <text evidence="1">Forms homooligomers, but does not form complexes with the other coronins. Interacts with Arp2/3 complex components, including ACTR2, ARPC1B and ARPC2. Binds actin (By similarity).</text>
</comment>
<comment type="subcellular location">
    <subcellularLocation>
        <location evidence="2">Cytoplasm</location>
        <location evidence="2">Cytoskeleton</location>
    </subcellularLocation>
    <subcellularLocation>
        <location evidence="2">Cytoplasm</location>
        <location evidence="2">Cytoskeleton</location>
        <location evidence="2">Stress fiber</location>
    </subcellularLocation>
    <text evidence="2">Localized to the leading edge in fibroblasts, as well as weakly along actin stress fibers.</text>
</comment>
<comment type="tissue specificity">
    <text evidence="5">Ubiquitous.</text>
</comment>
<comment type="PTM">
    <text evidence="1">Phosphorylation on Ser-2 regulates the interaction with the Arp2/3 complex and cell motility in fibroblasts. Phosphorylation does not seem to affect subcellular location (By similarity).</text>
</comment>
<comment type="similarity">
    <text evidence="6">Belongs to the WD repeat coronin family.</text>
</comment>